<sequence length="35" mass="4014">MTLAQFAMIFWHDLAAPILAGIITAAIVSWWRNRK</sequence>
<organism>
    <name type="scientific">Escherichia coli (strain K12)</name>
    <dbReference type="NCBI Taxonomy" id="83333"/>
    <lineage>
        <taxon>Bacteria</taxon>
        <taxon>Pseudomonadati</taxon>
        <taxon>Pseudomonadota</taxon>
        <taxon>Gammaproteobacteria</taxon>
        <taxon>Enterobacterales</taxon>
        <taxon>Enterobacteriaceae</taxon>
        <taxon>Escherichia</taxon>
    </lineage>
</organism>
<evidence type="ECO:0000250" key="1">
    <source>
        <dbReference type="UniProtKB" id="P0DPD0"/>
    </source>
</evidence>
<evidence type="ECO:0000255" key="2"/>
<evidence type="ECO:0000305" key="3"/>
<feature type="peptide" id="PRO_0000442720" description="Small toxic polypeptide LdrC">
    <location>
        <begin position="1"/>
        <end position="35"/>
    </location>
</feature>
<feature type="transmembrane region" description="Helical" evidence="2">
    <location>
        <begin position="8"/>
        <end position="28"/>
    </location>
</feature>
<gene>
    <name type="primary">ldrC</name>
    <name type="ordered locus">b4423</name>
    <name type="ordered locus">JW5959</name>
</gene>
<name>LDRC_ECOLI</name>
<accession>P0DPD1</accession>
<accession>Q2MBG4</accession>
<accession>Q6BF86</accession>
<dbReference type="EMBL" id="U00096">
    <property type="protein sequence ID" value="AAT48128.1"/>
    <property type="molecule type" value="Genomic_DNA"/>
</dbReference>
<dbReference type="EMBL" id="AP009048">
    <property type="protein sequence ID" value="BAE76394.1"/>
    <property type="molecule type" value="Genomic_DNA"/>
</dbReference>
<dbReference type="RefSeq" id="WP_000170955.1">
    <property type="nucleotide sequence ID" value="NZ_SSZK01000010.1"/>
</dbReference>
<dbReference type="RefSeq" id="YP_025299.1">
    <property type="nucleotide sequence ID" value="NC_000913.3"/>
</dbReference>
<dbReference type="SMR" id="P0DPD1"/>
<dbReference type="FunCoup" id="P0DPD1">
    <property type="interactions" value="1"/>
</dbReference>
<dbReference type="EnsemblBacteria" id="AAT48128">
    <property type="protein sequence ID" value="AAT48128"/>
    <property type="gene ID" value="b4423"/>
</dbReference>
<dbReference type="GeneID" id="2847775"/>
<dbReference type="KEGG" id="ecj:JW5959"/>
<dbReference type="KEGG" id="eco:b4419"/>
<dbReference type="KEGG" id="eco:b4423"/>
<dbReference type="HOGENOM" id="CLU_212598_1_0_6"/>
<dbReference type="InParanoid" id="P0DPD1"/>
<dbReference type="OrthoDB" id="6588978at2"/>
<dbReference type="BioCyc" id="EcoCyc:MONOMER0-1603"/>
<dbReference type="PRO" id="PR:P0DPD1"/>
<dbReference type="Proteomes" id="UP000000625">
    <property type="component" value="Chromosome"/>
</dbReference>
<dbReference type="GO" id="GO:0005886">
    <property type="term" value="C:plasma membrane"/>
    <property type="evidence" value="ECO:0007669"/>
    <property type="project" value="UniProtKB-SubCell"/>
</dbReference>
<dbReference type="InterPro" id="IPR025253">
    <property type="entry name" value="Toxin_Ldr"/>
</dbReference>
<dbReference type="Pfam" id="PF13940">
    <property type="entry name" value="Ldr_toxin"/>
    <property type="match status" value="1"/>
</dbReference>
<proteinExistence type="inferred from homology"/>
<protein>
    <recommendedName>
        <fullName>Small toxic polypeptide LdrC</fullName>
    </recommendedName>
</protein>
<comment type="function">
    <text evidence="1">Toxic component of a type I toxin-antitoxin (TA) system. Overexpression causes rapid cell killing, probably by disrupting the cell inner membrane and disruption of ATP synthesis.</text>
</comment>
<comment type="subcellular location">
    <subcellularLocation>
        <location evidence="1">Cell inner membrane</location>
        <topology evidence="2">Single-pass membrane protein</topology>
    </subcellularLocation>
</comment>
<comment type="induction">
    <text evidence="3">Expression of the proteinaceous toxin is probably controlled by an antisense sRNA, in this case RdlC. Only a few of these TA systems have been mechanistically characterized; the mechanisms used to control expression of the toxin gene are not necessarily the same (Probable).</text>
</comment>
<comment type="similarity">
    <text evidence="3">Belongs to the Ldr toxic peptide family.</text>
</comment>
<reference key="1">
    <citation type="journal article" date="1997" name="Science">
        <title>The complete genome sequence of Escherichia coli K-12.</title>
        <authorList>
            <person name="Blattner F.R."/>
            <person name="Plunkett G. III"/>
            <person name="Bloch C.A."/>
            <person name="Perna N.T."/>
            <person name="Burland V."/>
            <person name="Riley M."/>
            <person name="Collado-Vides J."/>
            <person name="Glasner J.D."/>
            <person name="Rode C.K."/>
            <person name="Mayhew G.F."/>
            <person name="Gregor J."/>
            <person name="Davis N.W."/>
            <person name="Kirkpatrick H.A."/>
            <person name="Goeden M.A."/>
            <person name="Rose D.J."/>
            <person name="Mau B."/>
            <person name="Shao Y."/>
        </authorList>
    </citation>
    <scope>NUCLEOTIDE SEQUENCE [LARGE SCALE GENOMIC DNA]</scope>
    <source>
        <strain>K12 / MG1655 / ATCC 47076</strain>
    </source>
</reference>
<reference key="2">
    <citation type="journal article" date="2006" name="Mol. Syst. Biol.">
        <title>Highly accurate genome sequences of Escherichia coli K-12 strains MG1655 and W3110.</title>
        <authorList>
            <person name="Hayashi K."/>
            <person name="Morooka N."/>
            <person name="Yamamoto Y."/>
            <person name="Fujita K."/>
            <person name="Isono K."/>
            <person name="Choi S."/>
            <person name="Ohtsubo E."/>
            <person name="Baba T."/>
            <person name="Wanner B.L."/>
            <person name="Mori H."/>
            <person name="Horiuchi T."/>
        </authorList>
    </citation>
    <scope>NUCLEOTIDE SEQUENCE [LARGE SCALE GENOMIC DNA]</scope>
    <source>
        <strain>K12 / W3110 / ATCC 27325 / DSM 5911</strain>
    </source>
</reference>
<reference key="3">
    <citation type="journal article" date="2002" name="Mol. Microbiol.">
        <title>Molecular characterization of long direct repeat (LDR) sequences expressing a stable mRNA encoding for a 35-amino-acid cell-killing peptide and a cis-encoded small antisense RNA in Escherichia coli.</title>
        <authorList>
            <person name="Kawano M."/>
            <person name="Oshima T."/>
            <person name="Kasai H."/>
            <person name="Mori H."/>
        </authorList>
    </citation>
    <scope>IDENTIFICATION</scope>
</reference>
<keyword id="KW-0997">Cell inner membrane</keyword>
<keyword id="KW-1003">Cell membrane</keyword>
<keyword id="KW-0472">Membrane</keyword>
<keyword id="KW-1185">Reference proteome</keyword>
<keyword id="KW-1277">Toxin-antitoxin system</keyword>
<keyword id="KW-0812">Transmembrane</keyword>
<keyword id="KW-1133">Transmembrane helix</keyword>